<name>PYRD_PSYA2</name>
<reference key="1">
    <citation type="journal article" date="2010" name="Appl. Environ. Microbiol.">
        <title>The genome sequence of Psychrobacter arcticus 273-4, a psychroactive Siberian permafrost bacterium, reveals mechanisms for adaptation to low-temperature growth.</title>
        <authorList>
            <person name="Ayala-del-Rio H.L."/>
            <person name="Chain P.S."/>
            <person name="Grzymski J.J."/>
            <person name="Ponder M.A."/>
            <person name="Ivanova N."/>
            <person name="Bergholz P.W."/>
            <person name="Di Bartolo G."/>
            <person name="Hauser L."/>
            <person name="Land M."/>
            <person name="Bakermans C."/>
            <person name="Rodrigues D."/>
            <person name="Klappenbach J."/>
            <person name="Zarka D."/>
            <person name="Larimer F."/>
            <person name="Richardson P."/>
            <person name="Murray A."/>
            <person name="Thomashow M."/>
            <person name="Tiedje J.M."/>
        </authorList>
    </citation>
    <scope>NUCLEOTIDE SEQUENCE [LARGE SCALE GENOMIC DNA]</scope>
    <source>
        <strain>DSM 17307 / VKM B-2377 / 273-4</strain>
    </source>
</reference>
<dbReference type="EC" id="1.3.5.2" evidence="1"/>
<dbReference type="EMBL" id="CP000082">
    <property type="protein sequence ID" value="AAZ19134.1"/>
    <property type="molecule type" value="Genomic_DNA"/>
</dbReference>
<dbReference type="RefSeq" id="WP_011280556.1">
    <property type="nucleotide sequence ID" value="NC_007204.1"/>
</dbReference>
<dbReference type="SMR" id="Q4FS74"/>
<dbReference type="STRING" id="259536.Psyc_1284"/>
<dbReference type="KEGG" id="par:Psyc_1284"/>
<dbReference type="eggNOG" id="COG0167">
    <property type="taxonomic scope" value="Bacteria"/>
</dbReference>
<dbReference type="HOGENOM" id="CLU_013640_2_0_6"/>
<dbReference type="OrthoDB" id="9802377at2"/>
<dbReference type="UniPathway" id="UPA00070">
    <property type="reaction ID" value="UER00946"/>
</dbReference>
<dbReference type="Proteomes" id="UP000000546">
    <property type="component" value="Chromosome"/>
</dbReference>
<dbReference type="GO" id="GO:0005737">
    <property type="term" value="C:cytoplasm"/>
    <property type="evidence" value="ECO:0007669"/>
    <property type="project" value="InterPro"/>
</dbReference>
<dbReference type="GO" id="GO:0005886">
    <property type="term" value="C:plasma membrane"/>
    <property type="evidence" value="ECO:0007669"/>
    <property type="project" value="UniProtKB-SubCell"/>
</dbReference>
<dbReference type="GO" id="GO:0106430">
    <property type="term" value="F:dihydroorotate dehydrogenase (quinone) activity"/>
    <property type="evidence" value="ECO:0007669"/>
    <property type="project" value="UniProtKB-EC"/>
</dbReference>
<dbReference type="GO" id="GO:0006207">
    <property type="term" value="P:'de novo' pyrimidine nucleobase biosynthetic process"/>
    <property type="evidence" value="ECO:0007669"/>
    <property type="project" value="InterPro"/>
</dbReference>
<dbReference type="GO" id="GO:0044205">
    <property type="term" value="P:'de novo' UMP biosynthetic process"/>
    <property type="evidence" value="ECO:0007669"/>
    <property type="project" value="UniProtKB-UniRule"/>
</dbReference>
<dbReference type="CDD" id="cd04738">
    <property type="entry name" value="DHOD_2_like"/>
    <property type="match status" value="1"/>
</dbReference>
<dbReference type="Gene3D" id="3.20.20.70">
    <property type="entry name" value="Aldolase class I"/>
    <property type="match status" value="1"/>
</dbReference>
<dbReference type="HAMAP" id="MF_00225">
    <property type="entry name" value="DHO_dh_type2"/>
    <property type="match status" value="1"/>
</dbReference>
<dbReference type="InterPro" id="IPR013785">
    <property type="entry name" value="Aldolase_TIM"/>
</dbReference>
<dbReference type="InterPro" id="IPR050074">
    <property type="entry name" value="DHO_dehydrogenase"/>
</dbReference>
<dbReference type="InterPro" id="IPR012135">
    <property type="entry name" value="Dihydroorotate_DH_1_2"/>
</dbReference>
<dbReference type="InterPro" id="IPR005719">
    <property type="entry name" value="Dihydroorotate_DH_2"/>
</dbReference>
<dbReference type="InterPro" id="IPR005720">
    <property type="entry name" value="Dihydroorotate_DH_cat"/>
</dbReference>
<dbReference type="InterPro" id="IPR001295">
    <property type="entry name" value="Dihydroorotate_DH_CS"/>
</dbReference>
<dbReference type="NCBIfam" id="NF003644">
    <property type="entry name" value="PRK05286.1-1"/>
    <property type="match status" value="1"/>
</dbReference>
<dbReference type="NCBIfam" id="NF003645">
    <property type="entry name" value="PRK05286.1-2"/>
    <property type="match status" value="1"/>
</dbReference>
<dbReference type="NCBIfam" id="NF003646">
    <property type="entry name" value="PRK05286.1-4"/>
    <property type="match status" value="1"/>
</dbReference>
<dbReference type="NCBIfam" id="NF003652">
    <property type="entry name" value="PRK05286.2-5"/>
    <property type="match status" value="1"/>
</dbReference>
<dbReference type="NCBIfam" id="TIGR01036">
    <property type="entry name" value="pyrD_sub2"/>
    <property type="match status" value="1"/>
</dbReference>
<dbReference type="PANTHER" id="PTHR48109:SF4">
    <property type="entry name" value="DIHYDROOROTATE DEHYDROGENASE (QUINONE), MITOCHONDRIAL"/>
    <property type="match status" value="1"/>
</dbReference>
<dbReference type="PANTHER" id="PTHR48109">
    <property type="entry name" value="DIHYDROOROTATE DEHYDROGENASE (QUINONE), MITOCHONDRIAL-RELATED"/>
    <property type="match status" value="1"/>
</dbReference>
<dbReference type="Pfam" id="PF01180">
    <property type="entry name" value="DHO_dh"/>
    <property type="match status" value="1"/>
</dbReference>
<dbReference type="PIRSF" id="PIRSF000164">
    <property type="entry name" value="DHO_oxidase"/>
    <property type="match status" value="1"/>
</dbReference>
<dbReference type="SUPFAM" id="SSF51395">
    <property type="entry name" value="FMN-linked oxidoreductases"/>
    <property type="match status" value="1"/>
</dbReference>
<dbReference type="PROSITE" id="PS00911">
    <property type="entry name" value="DHODEHASE_1"/>
    <property type="match status" value="1"/>
</dbReference>
<dbReference type="PROSITE" id="PS00912">
    <property type="entry name" value="DHODEHASE_2"/>
    <property type="match status" value="1"/>
</dbReference>
<keyword id="KW-1003">Cell membrane</keyword>
<keyword id="KW-0285">Flavoprotein</keyword>
<keyword id="KW-0288">FMN</keyword>
<keyword id="KW-0472">Membrane</keyword>
<keyword id="KW-0560">Oxidoreductase</keyword>
<keyword id="KW-0665">Pyrimidine biosynthesis</keyword>
<keyword id="KW-1185">Reference proteome</keyword>
<comment type="function">
    <text evidence="1">Catalyzes the conversion of dihydroorotate to orotate with quinone as electron acceptor.</text>
</comment>
<comment type="catalytic activity">
    <reaction evidence="1">
        <text>(S)-dihydroorotate + a quinone = orotate + a quinol</text>
        <dbReference type="Rhea" id="RHEA:30187"/>
        <dbReference type="ChEBI" id="CHEBI:24646"/>
        <dbReference type="ChEBI" id="CHEBI:30839"/>
        <dbReference type="ChEBI" id="CHEBI:30864"/>
        <dbReference type="ChEBI" id="CHEBI:132124"/>
        <dbReference type="EC" id="1.3.5.2"/>
    </reaction>
</comment>
<comment type="cofactor">
    <cofactor evidence="1">
        <name>FMN</name>
        <dbReference type="ChEBI" id="CHEBI:58210"/>
    </cofactor>
    <text evidence="1">Binds 1 FMN per subunit.</text>
</comment>
<comment type="pathway">
    <text evidence="1">Pyrimidine metabolism; UMP biosynthesis via de novo pathway; orotate from (S)-dihydroorotate (quinone route): step 1/1.</text>
</comment>
<comment type="subunit">
    <text evidence="1">Monomer.</text>
</comment>
<comment type="subcellular location">
    <subcellularLocation>
        <location evidence="1">Cell membrane</location>
        <topology evidence="1">Peripheral membrane protein</topology>
    </subcellularLocation>
</comment>
<comment type="similarity">
    <text evidence="1">Belongs to the dihydroorotate dehydrogenase family. Type 2 subfamily.</text>
</comment>
<organism>
    <name type="scientific">Psychrobacter arcticus (strain DSM 17307 / VKM B-2377 / 273-4)</name>
    <dbReference type="NCBI Taxonomy" id="259536"/>
    <lineage>
        <taxon>Bacteria</taxon>
        <taxon>Pseudomonadati</taxon>
        <taxon>Pseudomonadota</taxon>
        <taxon>Gammaproteobacteria</taxon>
        <taxon>Moraxellales</taxon>
        <taxon>Moraxellaceae</taxon>
        <taxon>Psychrobacter</taxon>
    </lineage>
</organism>
<sequence length="344" mass="37414">MSYALLRPFLFNMDPEHAHEMTLSLLDKAHKARVLGLVYGQSMQPTDCMGLQFSNPVGLAAGLDKNGDYIDALAELGFGFIEVGTVTPKPQVGNDRPRLFRLKQADAIINRMGFNNEGVDYLIENVKRCKYKGNIGINIGKNAATPVEQAADDYVYCLERVYPHASYITVNISSPNTKNLRDLQSGEALTHLLDAIKNRHSQLATEYGFYVPLVLKVAPDLDPLQVDYISQQLLDFEIDGLIATNTTLSRVGVEDLPDGDQAGGLSGRPVSHISTQILQQFSDQLDGKVALIGVGGIDSGAKAVKKIEAGADMVQLYSGLIYKGPGLVQSCIQSIGGYYDAMEN</sequence>
<evidence type="ECO:0000255" key="1">
    <source>
        <dbReference type="HAMAP-Rule" id="MF_00225"/>
    </source>
</evidence>
<feature type="chain" id="PRO_1000024207" description="Dihydroorotate dehydrogenase (quinone)">
    <location>
        <begin position="1"/>
        <end position="344"/>
    </location>
</feature>
<feature type="active site" description="Nucleophile" evidence="1">
    <location>
        <position position="174"/>
    </location>
</feature>
<feature type="binding site" evidence="1">
    <location>
        <begin position="61"/>
        <end position="65"/>
    </location>
    <ligand>
        <name>FMN</name>
        <dbReference type="ChEBI" id="CHEBI:58210"/>
    </ligand>
</feature>
<feature type="binding site" evidence="1">
    <location>
        <position position="65"/>
    </location>
    <ligand>
        <name>substrate</name>
    </ligand>
</feature>
<feature type="binding site" evidence="1">
    <location>
        <position position="85"/>
    </location>
    <ligand>
        <name>FMN</name>
        <dbReference type="ChEBI" id="CHEBI:58210"/>
    </ligand>
</feature>
<feature type="binding site" evidence="1">
    <location>
        <begin position="110"/>
        <end position="114"/>
    </location>
    <ligand>
        <name>substrate</name>
    </ligand>
</feature>
<feature type="binding site" evidence="1">
    <location>
        <position position="138"/>
    </location>
    <ligand>
        <name>FMN</name>
        <dbReference type="ChEBI" id="CHEBI:58210"/>
    </ligand>
</feature>
<feature type="binding site" evidence="1">
    <location>
        <position position="171"/>
    </location>
    <ligand>
        <name>FMN</name>
        <dbReference type="ChEBI" id="CHEBI:58210"/>
    </ligand>
</feature>
<feature type="binding site" evidence="1">
    <location>
        <position position="171"/>
    </location>
    <ligand>
        <name>substrate</name>
    </ligand>
</feature>
<feature type="binding site" evidence="1">
    <location>
        <position position="176"/>
    </location>
    <ligand>
        <name>substrate</name>
    </ligand>
</feature>
<feature type="binding site" evidence="1">
    <location>
        <position position="216"/>
    </location>
    <ligand>
        <name>FMN</name>
        <dbReference type="ChEBI" id="CHEBI:58210"/>
    </ligand>
</feature>
<feature type="binding site" evidence="1">
    <location>
        <position position="244"/>
    </location>
    <ligand>
        <name>FMN</name>
        <dbReference type="ChEBI" id="CHEBI:58210"/>
    </ligand>
</feature>
<feature type="binding site" evidence="1">
    <location>
        <begin position="245"/>
        <end position="246"/>
    </location>
    <ligand>
        <name>substrate</name>
    </ligand>
</feature>
<feature type="binding site" evidence="1">
    <location>
        <position position="267"/>
    </location>
    <ligand>
        <name>FMN</name>
        <dbReference type="ChEBI" id="CHEBI:58210"/>
    </ligand>
</feature>
<feature type="binding site" evidence="1">
    <location>
        <position position="296"/>
    </location>
    <ligand>
        <name>FMN</name>
        <dbReference type="ChEBI" id="CHEBI:58210"/>
    </ligand>
</feature>
<feature type="binding site" evidence="1">
    <location>
        <begin position="317"/>
        <end position="318"/>
    </location>
    <ligand>
        <name>FMN</name>
        <dbReference type="ChEBI" id="CHEBI:58210"/>
    </ligand>
</feature>
<protein>
    <recommendedName>
        <fullName evidence="1">Dihydroorotate dehydrogenase (quinone)</fullName>
        <ecNumber evidence="1">1.3.5.2</ecNumber>
    </recommendedName>
    <alternativeName>
        <fullName evidence="1">DHOdehase</fullName>
        <shortName evidence="1">DHOD</shortName>
        <shortName evidence="1">DHODase</shortName>
    </alternativeName>
    <alternativeName>
        <fullName evidence="1">Dihydroorotate oxidase</fullName>
    </alternativeName>
</protein>
<proteinExistence type="inferred from homology"/>
<accession>Q4FS74</accession>
<gene>
    <name evidence="1" type="primary">pyrD</name>
    <name type="ordered locus">Psyc_1284</name>
</gene>